<dbReference type="EC" id="2.4.2.9"/>
<dbReference type="EMBL" id="M59757">
    <property type="protein sequence ID" value="AAA21265.2"/>
    <property type="molecule type" value="Genomic_DNA"/>
</dbReference>
<dbReference type="EMBL" id="AL009126">
    <property type="protein sequence ID" value="CAB13421.1"/>
    <property type="molecule type" value="Genomic_DNA"/>
</dbReference>
<dbReference type="EMBL" id="U48870">
    <property type="protein sequence ID" value="AAB57770.1"/>
    <property type="molecule type" value="Genomic_DNA"/>
</dbReference>
<dbReference type="PIR" id="A69687">
    <property type="entry name" value="B57986"/>
</dbReference>
<dbReference type="RefSeq" id="NP_389430.1">
    <property type="nucleotide sequence ID" value="NC_000964.3"/>
</dbReference>
<dbReference type="RefSeq" id="WP_003232127.1">
    <property type="nucleotide sequence ID" value="NZ_OZ025638.1"/>
</dbReference>
<dbReference type="PDB" id="1A3C">
    <property type="method" value="X-ray"/>
    <property type="resolution" value="1.60 A"/>
    <property type="chains" value="A=1-181"/>
</dbReference>
<dbReference type="PDB" id="1A4X">
    <property type="method" value="X-ray"/>
    <property type="resolution" value="2.30 A"/>
    <property type="chains" value="A/B=1-181"/>
</dbReference>
<dbReference type="PDB" id="4P82">
    <property type="method" value="X-ray"/>
    <property type="resolution" value="1.30 A"/>
    <property type="chains" value="A=2-179"/>
</dbReference>
<dbReference type="PDBsum" id="1A3C"/>
<dbReference type="PDBsum" id="1A4X"/>
<dbReference type="PDBsum" id="4P82"/>
<dbReference type="SMR" id="P39765"/>
<dbReference type="FunCoup" id="P39765">
    <property type="interactions" value="301"/>
</dbReference>
<dbReference type="STRING" id="224308.BSU15470"/>
<dbReference type="PaxDb" id="224308-BSU15470"/>
<dbReference type="EnsemblBacteria" id="CAB13421">
    <property type="protein sequence ID" value="CAB13421"/>
    <property type="gene ID" value="BSU_15470"/>
</dbReference>
<dbReference type="GeneID" id="938030"/>
<dbReference type="KEGG" id="bsu:BSU15470"/>
<dbReference type="PATRIC" id="fig|224308.179.peg.1686"/>
<dbReference type="eggNOG" id="COG2065">
    <property type="taxonomic scope" value="Bacteria"/>
</dbReference>
<dbReference type="InParanoid" id="P39765"/>
<dbReference type="OrthoDB" id="9802227at2"/>
<dbReference type="PhylomeDB" id="P39765"/>
<dbReference type="BioCyc" id="BSUB:BSU15470-MONOMER"/>
<dbReference type="SABIO-RK" id="P39765"/>
<dbReference type="EvolutionaryTrace" id="P39765"/>
<dbReference type="Proteomes" id="UP000001570">
    <property type="component" value="Chromosome"/>
</dbReference>
<dbReference type="GO" id="GO:0003723">
    <property type="term" value="F:RNA binding"/>
    <property type="evidence" value="ECO:0007669"/>
    <property type="project" value="UniProtKB-UniRule"/>
</dbReference>
<dbReference type="GO" id="GO:0004845">
    <property type="term" value="F:uracil phosphoribosyltransferase activity"/>
    <property type="evidence" value="ECO:0007669"/>
    <property type="project" value="UniProtKB-UniRule"/>
</dbReference>
<dbReference type="GO" id="GO:0006353">
    <property type="term" value="P:DNA-templated transcription termination"/>
    <property type="evidence" value="ECO:0007669"/>
    <property type="project" value="UniProtKB-UniRule"/>
</dbReference>
<dbReference type="CDD" id="cd06223">
    <property type="entry name" value="PRTases_typeI"/>
    <property type="match status" value="1"/>
</dbReference>
<dbReference type="FunFam" id="3.40.50.2020:FF:000020">
    <property type="entry name" value="Bifunctional protein PyrR"/>
    <property type="match status" value="1"/>
</dbReference>
<dbReference type="Gene3D" id="3.40.50.2020">
    <property type="match status" value="1"/>
</dbReference>
<dbReference type="HAMAP" id="MF_01219">
    <property type="entry name" value="PyrR"/>
    <property type="match status" value="1"/>
</dbReference>
<dbReference type="InterPro" id="IPR000836">
    <property type="entry name" value="PRibTrfase_dom"/>
</dbReference>
<dbReference type="InterPro" id="IPR029057">
    <property type="entry name" value="PRTase-like"/>
</dbReference>
<dbReference type="InterPro" id="IPR023050">
    <property type="entry name" value="PyrR"/>
</dbReference>
<dbReference type="InterPro" id="IPR050137">
    <property type="entry name" value="PyrR_bifunctional"/>
</dbReference>
<dbReference type="NCBIfam" id="NF003545">
    <property type="entry name" value="PRK05205.1-1"/>
    <property type="match status" value="1"/>
</dbReference>
<dbReference type="NCBIfam" id="NF003547">
    <property type="entry name" value="PRK05205.1-3"/>
    <property type="match status" value="1"/>
</dbReference>
<dbReference type="NCBIfam" id="NF003548">
    <property type="entry name" value="PRK05205.1-4"/>
    <property type="match status" value="1"/>
</dbReference>
<dbReference type="NCBIfam" id="NF003549">
    <property type="entry name" value="PRK05205.1-5"/>
    <property type="match status" value="1"/>
</dbReference>
<dbReference type="PANTHER" id="PTHR11608">
    <property type="entry name" value="BIFUNCTIONAL PROTEIN PYRR"/>
    <property type="match status" value="1"/>
</dbReference>
<dbReference type="PANTHER" id="PTHR11608:SF0">
    <property type="entry name" value="BIFUNCTIONAL PROTEIN PYRR"/>
    <property type="match status" value="1"/>
</dbReference>
<dbReference type="Pfam" id="PF00156">
    <property type="entry name" value="Pribosyltran"/>
    <property type="match status" value="1"/>
</dbReference>
<dbReference type="SUPFAM" id="SSF53271">
    <property type="entry name" value="PRTase-like"/>
    <property type="match status" value="1"/>
</dbReference>
<feature type="chain" id="PRO_0000183030" description="Bifunctional protein PyrR">
    <location>
        <begin position="1"/>
        <end position="181"/>
    </location>
</feature>
<feature type="short sequence motif" description="PRPP-binding" evidence="1">
    <location>
        <begin position="101"/>
        <end position="113"/>
    </location>
</feature>
<feature type="binding site" evidence="1">
    <location>
        <begin position="41"/>
        <end position="42"/>
    </location>
    <ligand>
        <name>substrate</name>
    </ligand>
</feature>
<feature type="binding site" evidence="1">
    <location>
        <begin position="105"/>
        <end position="113"/>
    </location>
    <ligand>
        <name>substrate</name>
    </ligand>
</feature>
<feature type="binding site" evidence="1">
    <location>
        <position position="138"/>
    </location>
    <ligand>
        <name>substrate</name>
    </ligand>
</feature>
<feature type="binding site" evidence="1">
    <location>
        <position position="162"/>
    </location>
    <ligand>
        <name>substrate</name>
    </ligand>
</feature>
<feature type="mutagenesis site" description="No effect on ability to regulate the pyr operon; no effect on uprtase activity." evidence="2">
    <original>R</original>
    <variation>Q</variation>
    <location>
        <position position="15"/>
    </location>
</feature>
<feature type="mutagenesis site" description="No effect on ability to regulate the pyr operon only in presence of excess pyrimidines; reduced affinity for RNA; no effect on UPRTase activity." evidence="2">
    <original>T</original>
    <variation>A</variation>
    <location>
        <position position="18"/>
    </location>
</feature>
<feature type="mutagenesis site" description="Loss of ability to regulate the pyr operon; no effect on UPRTase activity." evidence="2">
    <original>R</original>
    <variation>Q</variation>
    <location>
        <position position="19"/>
    </location>
</feature>
<feature type="mutagenesis site" description="Loss of ability to regulate the pyr operon and to bind to RNA; no effect on UPRTase activity." evidence="2">
    <original>H</original>
    <variation>A</variation>
    <location>
        <position position="22"/>
    </location>
</feature>
<feature type="mutagenesis site" description="No effect on ability to regulate the pyr operon only in presence of excess pyrimidines; reduced affinity for RNA; no effect on UPRTase activity." evidence="2">
    <original>R</original>
    <variation>Q</variation>
    <location>
        <position position="27"/>
    </location>
</feature>
<feature type="mutagenesis site" description="Reduced ability to regulate the pyr operon; reduced affinity for RNA; loss of UPRTase activity." evidence="2">
    <original>T</original>
    <variation>I</variation>
    <location>
        <position position="41"/>
    </location>
</feature>
<feature type="mutagenesis site" description="Reduced ability to regulate the pyr operon; decreased UPRTase activity." evidence="2">
    <original>H</original>
    <variation>A</variation>
    <location>
        <position position="140"/>
    </location>
</feature>
<feature type="mutagenesis site" description="Loss of ability to regulate the pyr operon; highly reduced affinity for RNA; no effect on UPRTase activity." evidence="2">
    <original>R</original>
    <variation>Q</variation>
    <location>
        <position position="141"/>
    </location>
</feature>
<feature type="mutagenesis site" description="Reduced ability to regulate the pyr operon, and loss of ability to bind to RNA; no effect on UPRTase activity." evidence="2">
    <original>R</original>
    <variation>Q</variation>
    <location>
        <position position="146"/>
    </location>
</feature>
<feature type="mutagenesis site" description="No effect on ability to regulate the pyr operon only in presence of excess pyrimidines; reduced affinity for RNA; no effect on UPRTase activity." evidence="2">
    <original>K</original>
    <variation>Q</variation>
    <location>
        <position position="152"/>
    </location>
</feature>
<feature type="strand" evidence="6">
    <location>
        <begin position="4"/>
        <end position="8"/>
    </location>
</feature>
<feature type="helix" evidence="6">
    <location>
        <begin position="10"/>
        <end position="27"/>
    </location>
</feature>
<feature type="helix" evidence="6">
    <location>
        <begin position="29"/>
        <end position="31"/>
    </location>
</feature>
<feature type="strand" evidence="6">
    <location>
        <begin position="34"/>
        <end position="40"/>
    </location>
</feature>
<feature type="helix" evidence="6">
    <location>
        <begin position="41"/>
        <end position="58"/>
    </location>
</feature>
<feature type="strand" evidence="6">
    <location>
        <begin position="64"/>
        <end position="72"/>
    </location>
</feature>
<feature type="strand" evidence="6">
    <location>
        <begin position="74"/>
        <end position="76"/>
    </location>
</feature>
<feature type="strand" evidence="6">
    <location>
        <begin position="78"/>
        <end position="80"/>
    </location>
</feature>
<feature type="strand" evidence="6">
    <location>
        <begin position="84"/>
        <end position="91"/>
    </location>
</feature>
<feature type="strand" evidence="6">
    <location>
        <begin position="99"/>
        <end position="111"/>
    </location>
</feature>
<feature type="helix" evidence="6">
    <location>
        <begin position="112"/>
        <end position="124"/>
    </location>
</feature>
<feature type="strand" evidence="6">
    <location>
        <begin position="128"/>
        <end position="137"/>
    </location>
</feature>
<feature type="strand" evidence="6">
    <location>
        <begin position="142"/>
        <end position="144"/>
    </location>
</feature>
<feature type="strand" evidence="6">
    <location>
        <begin position="148"/>
        <end position="153"/>
    </location>
</feature>
<feature type="strand" evidence="6">
    <location>
        <begin position="160"/>
        <end position="165"/>
    </location>
</feature>
<feature type="helix" evidence="6">
    <location>
        <begin position="167"/>
        <end position="170"/>
    </location>
</feature>
<feature type="strand" evidence="6">
    <location>
        <begin position="174"/>
        <end position="179"/>
    </location>
</feature>
<comment type="function">
    <text>Regulates transcriptional attenuation of the pyrimidine nucleotide (pyr) operon by binding in a uridine-dependent manner to specific sites on pyr mRNA. This disrupts an antiterminator hairpin in the RNA and favors formation of a downstream transcription terminator, leading to a reduced expression of downstream genes.</text>
</comment>
<comment type="function">
    <text>Also displays a weak uracil phosphoribosyltransferase activity which is not physiologically significant.</text>
</comment>
<comment type="catalytic activity">
    <reaction evidence="3">
        <text>UMP + diphosphate = 5-phospho-alpha-D-ribose 1-diphosphate + uracil</text>
        <dbReference type="Rhea" id="RHEA:13017"/>
        <dbReference type="ChEBI" id="CHEBI:17568"/>
        <dbReference type="ChEBI" id="CHEBI:33019"/>
        <dbReference type="ChEBI" id="CHEBI:57865"/>
        <dbReference type="ChEBI" id="CHEBI:58017"/>
        <dbReference type="EC" id="2.4.2.9"/>
    </reaction>
</comment>
<comment type="biophysicochemical properties">
    <phDependence>
        <text>Optimum pH is 8.2 for UPRTase activity.</text>
    </phDependence>
</comment>
<comment type="subunit">
    <text>Homodimer and homohexamer; in equilibrium.</text>
</comment>
<comment type="mass spectrometry"/>
<comment type="miscellaneous">
    <text>Mutagenesis studies identified four amino acid residues that seem to be involved directly in binding of the protein to pyr mRNA: Thr-18, His-22, Arg-141 and Arg-146. Arg-27 and Lys-152 were also likely to be involved in RNA-binding, but mutations may have altered their subunit-subunit interactions. Arg-19 was implicated in pyr regulation, but a specific role in RNA-binding could not be demonstrated.</text>
</comment>
<comment type="miscellaneous">
    <text>UMP and UTP increase the affinity of PyrR for RNA.</text>
</comment>
<comment type="similarity">
    <text evidence="5">Belongs to the purine/pyrimidine phosphoribosyltransferase family. PyrR subfamily.</text>
</comment>
<sequence>MNQKAVILDEQAIRRALTRIAHEMIERNKGMNNCILVGIKTRGIYLAKRLAERIEQIEGNPVTVGEIDITLYRDDLSKKTSNDEPLVKGADIPVDITDQKVILVDDVLYTGRTVRAGMDALVDVGRPSSIQLAVLVDRGHRELPIRADYIGKNIPTSKSEKVMVQLDEVDQNDLVAIYENE</sequence>
<organism>
    <name type="scientific">Bacillus subtilis (strain 168)</name>
    <dbReference type="NCBI Taxonomy" id="224308"/>
    <lineage>
        <taxon>Bacteria</taxon>
        <taxon>Bacillati</taxon>
        <taxon>Bacillota</taxon>
        <taxon>Bacilli</taxon>
        <taxon>Bacillales</taxon>
        <taxon>Bacillaceae</taxon>
        <taxon>Bacillus</taxon>
    </lineage>
</organism>
<evidence type="ECO:0000250" key="1"/>
<evidence type="ECO:0000269" key="2">
    <source>
    </source>
</evidence>
<evidence type="ECO:0000269" key="3">
    <source>
    </source>
</evidence>
<evidence type="ECO:0000269" key="4">
    <source>
    </source>
</evidence>
<evidence type="ECO:0000305" key="5"/>
<evidence type="ECO:0007829" key="6">
    <source>
        <dbReference type="PDB" id="4P82"/>
    </source>
</evidence>
<gene>
    <name type="primary">pyrR</name>
    <name type="ordered locus">BSU15470</name>
</gene>
<proteinExistence type="evidence at protein level"/>
<name>PYRR_BACSU</name>
<protein>
    <recommendedName>
        <fullName>Bifunctional protein PyrR</fullName>
    </recommendedName>
    <domain>
        <recommendedName>
            <fullName>Pyrimidine operon regulatory protein</fullName>
        </recommendedName>
    </domain>
    <domain>
        <recommendedName>
            <fullName>Uracil phosphoribosyltransferase</fullName>
            <shortName>UPRTase</shortName>
            <ecNumber>2.4.2.9</ecNumber>
        </recommendedName>
    </domain>
</protein>
<accession>P39765</accession>
<accession>P25982</accession>
<accession>Q45483</accession>
<reference key="1">
    <citation type="journal article" date="1991" name="J. Biol. Chem.">
        <title>Functional organization and nucleotide sequence of the Bacillus subtilis pyrimidine biosynthetic operon.</title>
        <authorList>
            <person name="Quinn C.L."/>
            <person name="Stephenson B.T."/>
            <person name="Switzer R.L."/>
        </authorList>
    </citation>
    <scope>NUCLEOTIDE SEQUENCE [GENOMIC DNA]</scope>
    <source>
        <strain>1A610</strain>
        <strain>JH861</strain>
    </source>
</reference>
<reference key="2">
    <citation type="journal article" date="1994" name="J. Bacteriol.">
        <title>Regulation of the Bacillus subtilis pyrimidine biosynthetic (pyr) gene cluster by an autogenous transcriptional attenuation mechanism.</title>
        <authorList>
            <person name="Turner R.J."/>
            <person name="Lu Y."/>
            <person name="Switzer R.L."/>
        </authorList>
    </citation>
    <scope>SEQUENCE REVISION</scope>
    <scope>CHARACTERIZATION</scope>
</reference>
<reference key="3">
    <citation type="submission" date="1999-05" db="EMBL/GenBank/DDBJ databases">
        <authorList>
            <person name="Switzer R.L."/>
        </authorList>
    </citation>
    <scope>SEQUENCE REVISION TO 34 AND 53</scope>
</reference>
<reference key="4">
    <citation type="journal article" date="1997" name="Nature">
        <title>The complete genome sequence of the Gram-positive bacterium Bacillus subtilis.</title>
        <authorList>
            <person name="Kunst F."/>
            <person name="Ogasawara N."/>
            <person name="Moszer I."/>
            <person name="Albertini A.M."/>
            <person name="Alloni G."/>
            <person name="Azevedo V."/>
            <person name="Bertero M.G."/>
            <person name="Bessieres P."/>
            <person name="Bolotin A."/>
            <person name="Borchert S."/>
            <person name="Borriss R."/>
            <person name="Boursier L."/>
            <person name="Brans A."/>
            <person name="Braun M."/>
            <person name="Brignell S.C."/>
            <person name="Bron S."/>
            <person name="Brouillet S."/>
            <person name="Bruschi C.V."/>
            <person name="Caldwell B."/>
            <person name="Capuano V."/>
            <person name="Carter N.M."/>
            <person name="Choi S.-K."/>
            <person name="Codani J.-J."/>
            <person name="Connerton I.F."/>
            <person name="Cummings N.J."/>
            <person name="Daniel R.A."/>
            <person name="Denizot F."/>
            <person name="Devine K.M."/>
            <person name="Duesterhoeft A."/>
            <person name="Ehrlich S.D."/>
            <person name="Emmerson P.T."/>
            <person name="Entian K.-D."/>
            <person name="Errington J."/>
            <person name="Fabret C."/>
            <person name="Ferrari E."/>
            <person name="Foulger D."/>
            <person name="Fritz C."/>
            <person name="Fujita M."/>
            <person name="Fujita Y."/>
            <person name="Fuma S."/>
            <person name="Galizzi A."/>
            <person name="Galleron N."/>
            <person name="Ghim S.-Y."/>
            <person name="Glaser P."/>
            <person name="Goffeau A."/>
            <person name="Golightly E.J."/>
            <person name="Grandi G."/>
            <person name="Guiseppi G."/>
            <person name="Guy B.J."/>
            <person name="Haga K."/>
            <person name="Haiech J."/>
            <person name="Harwood C.R."/>
            <person name="Henaut A."/>
            <person name="Hilbert H."/>
            <person name="Holsappel S."/>
            <person name="Hosono S."/>
            <person name="Hullo M.-F."/>
            <person name="Itaya M."/>
            <person name="Jones L.-M."/>
            <person name="Joris B."/>
            <person name="Karamata D."/>
            <person name="Kasahara Y."/>
            <person name="Klaerr-Blanchard M."/>
            <person name="Klein C."/>
            <person name="Kobayashi Y."/>
            <person name="Koetter P."/>
            <person name="Koningstein G."/>
            <person name="Krogh S."/>
            <person name="Kumano M."/>
            <person name="Kurita K."/>
            <person name="Lapidus A."/>
            <person name="Lardinois S."/>
            <person name="Lauber J."/>
            <person name="Lazarevic V."/>
            <person name="Lee S.-M."/>
            <person name="Levine A."/>
            <person name="Liu H."/>
            <person name="Masuda S."/>
            <person name="Mauel C."/>
            <person name="Medigue C."/>
            <person name="Medina N."/>
            <person name="Mellado R.P."/>
            <person name="Mizuno M."/>
            <person name="Moestl D."/>
            <person name="Nakai S."/>
            <person name="Noback M."/>
            <person name="Noone D."/>
            <person name="O'Reilly M."/>
            <person name="Ogawa K."/>
            <person name="Ogiwara A."/>
            <person name="Oudega B."/>
            <person name="Park S.-H."/>
            <person name="Parro V."/>
            <person name="Pohl T.M."/>
            <person name="Portetelle D."/>
            <person name="Porwollik S."/>
            <person name="Prescott A.M."/>
            <person name="Presecan E."/>
            <person name="Pujic P."/>
            <person name="Purnelle B."/>
            <person name="Rapoport G."/>
            <person name="Rey M."/>
            <person name="Reynolds S."/>
            <person name="Rieger M."/>
            <person name="Rivolta C."/>
            <person name="Rocha E."/>
            <person name="Roche B."/>
            <person name="Rose M."/>
            <person name="Sadaie Y."/>
            <person name="Sato T."/>
            <person name="Scanlan E."/>
            <person name="Schleich S."/>
            <person name="Schroeter R."/>
            <person name="Scoffone F."/>
            <person name="Sekiguchi J."/>
            <person name="Sekowska A."/>
            <person name="Seror S.J."/>
            <person name="Serror P."/>
            <person name="Shin B.-S."/>
            <person name="Soldo B."/>
            <person name="Sorokin A."/>
            <person name="Tacconi E."/>
            <person name="Takagi T."/>
            <person name="Takahashi H."/>
            <person name="Takemaru K."/>
            <person name="Takeuchi M."/>
            <person name="Tamakoshi A."/>
            <person name="Tanaka T."/>
            <person name="Terpstra P."/>
            <person name="Tognoni A."/>
            <person name="Tosato V."/>
            <person name="Uchiyama S."/>
            <person name="Vandenbol M."/>
            <person name="Vannier F."/>
            <person name="Vassarotti A."/>
            <person name="Viari A."/>
            <person name="Wambutt R."/>
            <person name="Wedler E."/>
            <person name="Wedler H."/>
            <person name="Weitzenegger T."/>
            <person name="Winters P."/>
            <person name="Wipat A."/>
            <person name="Yamamoto H."/>
            <person name="Yamane K."/>
            <person name="Yasumoto K."/>
            <person name="Yata K."/>
            <person name="Yoshida K."/>
            <person name="Yoshikawa H.-F."/>
            <person name="Zumstein E."/>
            <person name="Yoshikawa H."/>
            <person name="Danchin A."/>
        </authorList>
    </citation>
    <scope>NUCLEOTIDE SEQUENCE [LARGE SCALE GENOMIC DNA]</scope>
    <source>
        <strain>168</strain>
    </source>
</reference>
<reference key="5">
    <citation type="journal article" date="1997" name="Microbiology">
        <title>The signal peptidase II (lsp) gene of Bacillus subtilis.</title>
        <authorList>
            <person name="Pragai Z."/>
            <person name="Tjalsma H."/>
            <person name="Bolhuis A."/>
            <person name="van Dijl J.M."/>
            <person name="Venema G."/>
            <person name="Bron S."/>
        </authorList>
    </citation>
    <scope>NUCLEOTIDE SEQUENCE [GENOMIC DNA] OF 1-173</scope>
    <source>
        <strain>168</strain>
    </source>
</reference>
<reference key="6">
    <citation type="journal article" date="1995" name="J. Bacteriol.">
        <title>Two genes encoding uracil phosphoribosyltransferase are present in Bacillus subtilis.</title>
        <authorList>
            <person name="Martinussen J."/>
            <person name="Glaser P."/>
            <person name="Andersen P.S."/>
            <person name="Saxild H.H."/>
        </authorList>
    </citation>
    <scope>ENZYME ACTIVITY</scope>
</reference>
<reference key="7">
    <citation type="journal article" date="1998" name="J. Biol. Chem.">
        <title>Purification and characterization of Bacillus subtilis PyrR, a bifunctional pyr mRNA-binding attenuation protein/uracil phosphoribosyltransferase.</title>
        <authorList>
            <person name="Turner R.J."/>
            <person name="Bonner E.R."/>
            <person name="Grabner G.K."/>
            <person name="Switzer R.L."/>
        </authorList>
    </citation>
    <scope>CHARACTERIZATION</scope>
    <scope>MASS SPECTROMETRY</scope>
</reference>
<reference key="8">
    <citation type="journal article" date="2002" name="J. Bacteriol.">
        <title>Characterization of the interaction of Bacillus subtilis PyrR with pyr mRNA by site-directed mutagenesis of the protein.</title>
        <authorList>
            <person name="Savacool H.K."/>
            <person name="Switzer R.L."/>
        </authorList>
    </citation>
    <scope>MUTAGENESIS OF ARG-15; THR-18; ARG-19; HIS-22; ARG-27; THR-41; HIS-140; ARG-141; ARG-146 AND LYS-152</scope>
</reference>
<reference key="9">
    <citation type="journal article" date="1998" name="Structure">
        <title>Adaptation of an enzyme to regulatory function: structure of Bacillus subtilis PyrR, a pyr RNA-binding attenuation protein and uracil phosphoribosyltransferase.</title>
        <authorList>
            <person name="Tomchick D.R."/>
            <person name="Turner R.J."/>
            <person name="Switzer R.L."/>
            <person name="Smith J.L."/>
        </authorList>
    </citation>
    <scope>X-RAY CRYSTALLOGRAPHY (1.6 ANGSTROMS)</scope>
</reference>
<keyword id="KW-0002">3D-structure</keyword>
<keyword id="KW-0328">Glycosyltransferase</keyword>
<keyword id="KW-1185">Reference proteome</keyword>
<keyword id="KW-0694">RNA-binding</keyword>
<keyword id="KW-0804">Transcription</keyword>
<keyword id="KW-0805">Transcription regulation</keyword>
<keyword id="KW-0806">Transcription termination</keyword>
<keyword id="KW-0808">Transferase</keyword>